<accession>Q98855</accession>
<feature type="chain" id="PRO_0000187050" description="Putative calcium-activated potassium channel subunit beta">
    <location>
        <begin position="1"/>
        <end position="200"/>
    </location>
</feature>
<feature type="topological domain" description="Cytoplasmic" evidence="2">
    <location>
        <begin position="1"/>
        <end position="19"/>
    </location>
</feature>
<feature type="transmembrane region" description="Helical; Name=1" evidence="2">
    <location>
        <begin position="20"/>
        <end position="40"/>
    </location>
</feature>
<feature type="topological domain" description="Extracellular" evidence="2">
    <location>
        <begin position="41"/>
        <end position="166"/>
    </location>
</feature>
<feature type="transmembrane region" description="Helical; Name=2" evidence="2">
    <location>
        <begin position="167"/>
        <end position="187"/>
    </location>
</feature>
<feature type="topological domain" description="Cytoplasmic" evidence="2">
    <location>
        <begin position="188"/>
        <end position="200"/>
    </location>
</feature>
<feature type="glycosylation site" description="N-linked (GlcNAc...) asparagine" evidence="2">
    <location>
        <position position="89"/>
    </location>
</feature>
<keyword id="KW-0325">Glycoprotein</keyword>
<keyword id="KW-0407">Ion channel</keyword>
<keyword id="KW-0406">Ion transport</keyword>
<keyword id="KW-0472">Membrane</keyword>
<keyword id="KW-1185">Reference proteome</keyword>
<keyword id="KW-0812">Transmembrane</keyword>
<keyword id="KW-1133">Transmembrane helix</keyword>
<keyword id="KW-0813">Transport</keyword>
<protein>
    <recommendedName>
        <fullName>Putative calcium-activated potassium channel subunit beta</fullName>
    </recommendedName>
</protein>
<sequence>MLAKKLVTAQKRGETRALCLGLGMVACSMMMYFFIGITIVPFYTKSVWTTETICKVLKANIKDKTHCTNSEGSEDEDIFHYPCLQVWVNLTASGQEVMLYHTEDTLERNPKCSYVPGNSENSKEVKARIETIASNFKKYQTFPCYYDPGGMQTNVILSRLYPPKGLLFTFLWPTLMFTGGCLIIVLVKISQYFSVLSARQ</sequence>
<comment type="function">
    <text evidence="1">Probable regulatory subunit of the calcium activated potassium KCNMA1 (maxiK) channel that modulates the calcium sensitivity and gating kinetics of KCNMA1, thereby contributing to KCNMA1 channel diversity. Increases the apparent Ca(2+)/voltage sensitivity of the KCNMA1 channel (By similarity).</text>
</comment>
<comment type="subunit">
    <text evidence="1">Probably interacts with KCNMA1 tetramer.</text>
</comment>
<comment type="subcellular location">
    <subcellularLocation>
        <location>Membrane</location>
        <topology>Multi-pass membrane protein</topology>
    </subcellularLocation>
</comment>
<comment type="similarity">
    <text evidence="3">Belongs to the KCNMB (TC 8.A.14.1) family. KCNMB1 subfamily.</text>
</comment>
<proteinExistence type="evidence at transcript level"/>
<organism>
    <name type="scientific">Coturnix japonica</name>
    <name type="common">Japanese quail</name>
    <name type="synonym">Coturnix coturnix japonica</name>
    <dbReference type="NCBI Taxonomy" id="93934"/>
    <lineage>
        <taxon>Eukaryota</taxon>
        <taxon>Metazoa</taxon>
        <taxon>Chordata</taxon>
        <taxon>Craniata</taxon>
        <taxon>Vertebrata</taxon>
        <taxon>Euteleostomi</taxon>
        <taxon>Archelosauria</taxon>
        <taxon>Archosauria</taxon>
        <taxon>Dinosauria</taxon>
        <taxon>Saurischia</taxon>
        <taxon>Theropoda</taxon>
        <taxon>Coelurosauria</taxon>
        <taxon>Aves</taxon>
        <taxon>Neognathae</taxon>
        <taxon>Galloanserae</taxon>
        <taxon>Galliformes</taxon>
        <taxon>Phasianidae</taxon>
        <taxon>Perdicinae</taxon>
        <taxon>Coturnix</taxon>
    </lineage>
</organism>
<gene>
    <name type="primary">KCNMB1</name>
    <name type="synonym">CO6</name>
</gene>
<reference key="1">
    <citation type="journal article" date="1997" name="Oncogene">
        <title>Suppression in transformed avian fibroblasts of a gene (CO6) encoding a membrane protein related to mammalian potassium channel regulatory subunits.</title>
        <authorList>
            <person name="Oberst C."/>
            <person name="Weiskirchen R."/>
            <person name="Hartl M."/>
            <person name="Bister K."/>
        </authorList>
    </citation>
    <scope>NUCLEOTIDE SEQUENCE [MRNA]</scope>
</reference>
<name>KCMB1_COTJA</name>
<evidence type="ECO:0000250" key="1"/>
<evidence type="ECO:0000255" key="2"/>
<evidence type="ECO:0000305" key="3"/>
<dbReference type="EMBL" id="U67865">
    <property type="protein sequence ID" value="AAC26967.1"/>
    <property type="molecule type" value="mRNA"/>
</dbReference>
<dbReference type="SMR" id="Q98855"/>
<dbReference type="GlyCosmos" id="Q98855">
    <property type="glycosylation" value="1 site, No reported glycans"/>
</dbReference>
<dbReference type="Proteomes" id="UP000694412">
    <property type="component" value="Unplaced"/>
</dbReference>
<dbReference type="GO" id="GO:0008076">
    <property type="term" value="C:voltage-gated potassium channel complex"/>
    <property type="evidence" value="ECO:0007669"/>
    <property type="project" value="TreeGrafter"/>
</dbReference>
<dbReference type="GO" id="GO:0015269">
    <property type="term" value="F:calcium-activated potassium channel activity"/>
    <property type="evidence" value="ECO:0007669"/>
    <property type="project" value="InterPro"/>
</dbReference>
<dbReference type="GO" id="GO:0015459">
    <property type="term" value="F:potassium channel regulator activity"/>
    <property type="evidence" value="ECO:0007669"/>
    <property type="project" value="TreeGrafter"/>
</dbReference>
<dbReference type="GO" id="GO:0005513">
    <property type="term" value="P:detection of calcium ion"/>
    <property type="evidence" value="ECO:0007669"/>
    <property type="project" value="TreeGrafter"/>
</dbReference>
<dbReference type="InterPro" id="IPR003930">
    <property type="entry name" value="K_chnl_Ca-activ_BK_bsu"/>
</dbReference>
<dbReference type="PANTHER" id="PTHR10258">
    <property type="entry name" value="CALCIUM-ACTIVATED POTASSIUM CHANNEL SUBUNIT BETA"/>
    <property type="match status" value="1"/>
</dbReference>
<dbReference type="PANTHER" id="PTHR10258:SF1">
    <property type="entry name" value="CALCIUM-ACTIVATED POTASSIUM CHANNEL SUBUNIT BETA-1"/>
    <property type="match status" value="1"/>
</dbReference>
<dbReference type="Pfam" id="PF03185">
    <property type="entry name" value="CaKB"/>
    <property type="match status" value="1"/>
</dbReference>
<dbReference type="PRINTS" id="PR01450">
    <property type="entry name" value="BKCHANNELB"/>
</dbReference>